<sequence length="275" mass="31763">MRKVLRVKKNIKIARIVPLVLLLVACGRGEVTAQSSSGWDQLVYLFARAIQWLSFDGSIGVGIILFTLTIRLMLMPLFNMQIKSSQKMQDIQPELRELQRKYAGKDTQTRMKLAEESQALYKKYGVNPYASLLPLLIQMPVMIALFQALTRVSFLKTGTFLWVELAQHDHLYLLPVLAAVFTFLSTWLTNLAAKEKNVMMTVMIYVMPLMIFFMGFNLASGVVLYWTVSNAFQVVQLLLLNNPFKIIAERQRLANEEKERRLRERRARKKAMKRK</sequence>
<dbReference type="EMBL" id="AE004092">
    <property type="protein sequence ID" value="AAK33324.1"/>
    <property type="molecule type" value="Genomic_DNA"/>
</dbReference>
<dbReference type="EMBL" id="CP000017">
    <property type="protein sequence ID" value="AAZ50827.1"/>
    <property type="status" value="ALT_INIT"/>
    <property type="molecule type" value="Genomic_DNA"/>
</dbReference>
<dbReference type="RefSeq" id="NP_268603.1">
    <property type="nucleotide sequence ID" value="NC_002737.2"/>
</dbReference>
<dbReference type="SMR" id="P65631"/>
<dbReference type="PaxDb" id="1314-HKU360_00249"/>
<dbReference type="DNASU" id="900549"/>
<dbReference type="KEGG" id="spy:SPy_0247"/>
<dbReference type="KEGG" id="spz:M5005_Spy0208"/>
<dbReference type="PATRIC" id="fig|160490.10.peg.216"/>
<dbReference type="HOGENOM" id="CLU_036138_5_0_9"/>
<dbReference type="OMA" id="ATFVQQK"/>
<dbReference type="Proteomes" id="UP000000750">
    <property type="component" value="Chromosome"/>
</dbReference>
<dbReference type="GO" id="GO:0005886">
    <property type="term" value="C:plasma membrane"/>
    <property type="evidence" value="ECO:0007669"/>
    <property type="project" value="UniProtKB-SubCell"/>
</dbReference>
<dbReference type="GO" id="GO:0032977">
    <property type="term" value="F:membrane insertase activity"/>
    <property type="evidence" value="ECO:0007669"/>
    <property type="project" value="InterPro"/>
</dbReference>
<dbReference type="GO" id="GO:0051205">
    <property type="term" value="P:protein insertion into membrane"/>
    <property type="evidence" value="ECO:0007669"/>
    <property type="project" value="TreeGrafter"/>
</dbReference>
<dbReference type="GO" id="GO:0015031">
    <property type="term" value="P:protein transport"/>
    <property type="evidence" value="ECO:0007669"/>
    <property type="project" value="UniProtKB-KW"/>
</dbReference>
<dbReference type="CDD" id="cd20070">
    <property type="entry name" value="5TM_YidC_Alb3"/>
    <property type="match status" value="1"/>
</dbReference>
<dbReference type="HAMAP" id="MF_01811">
    <property type="entry name" value="YidC_type2"/>
    <property type="match status" value="1"/>
</dbReference>
<dbReference type="InterPro" id="IPR001708">
    <property type="entry name" value="YidC/ALB3/OXA1/COX18"/>
</dbReference>
<dbReference type="InterPro" id="IPR028055">
    <property type="entry name" value="YidC/Oxa/ALB_C"/>
</dbReference>
<dbReference type="InterPro" id="IPR023060">
    <property type="entry name" value="YidC/YidC1/YidC2_Firmicutes"/>
</dbReference>
<dbReference type="InterPro" id="IPR047196">
    <property type="entry name" value="YidC_ALB_C"/>
</dbReference>
<dbReference type="NCBIfam" id="TIGR03592">
    <property type="entry name" value="yidC_oxa1_cterm"/>
    <property type="match status" value="1"/>
</dbReference>
<dbReference type="PANTHER" id="PTHR12428:SF65">
    <property type="entry name" value="CYTOCHROME C OXIDASE ASSEMBLY PROTEIN COX18, MITOCHONDRIAL"/>
    <property type="match status" value="1"/>
</dbReference>
<dbReference type="PANTHER" id="PTHR12428">
    <property type="entry name" value="OXA1"/>
    <property type="match status" value="1"/>
</dbReference>
<dbReference type="Pfam" id="PF02096">
    <property type="entry name" value="60KD_IMP"/>
    <property type="match status" value="1"/>
</dbReference>
<dbReference type="PRINTS" id="PR00701">
    <property type="entry name" value="60KDINNERMP"/>
</dbReference>
<dbReference type="PROSITE" id="PS51257">
    <property type="entry name" value="PROKAR_LIPOPROTEIN"/>
    <property type="match status" value="1"/>
</dbReference>
<organism>
    <name type="scientific">Streptococcus pyogenes serotype M1</name>
    <dbReference type="NCBI Taxonomy" id="301447"/>
    <lineage>
        <taxon>Bacteria</taxon>
        <taxon>Bacillati</taxon>
        <taxon>Bacillota</taxon>
        <taxon>Bacilli</taxon>
        <taxon>Lactobacillales</taxon>
        <taxon>Streptococcaceae</taxon>
        <taxon>Streptococcus</taxon>
    </lineage>
</organism>
<accession>P65631</accession>
<accession>Q490Z1</accession>
<accession>Q9A1J3</accession>
<reference key="1">
    <citation type="journal article" date="2001" name="Proc. Natl. Acad. Sci. U.S.A.">
        <title>Complete genome sequence of an M1 strain of Streptococcus pyogenes.</title>
        <authorList>
            <person name="Ferretti J.J."/>
            <person name="McShan W.M."/>
            <person name="Ajdic D.J."/>
            <person name="Savic D.J."/>
            <person name="Savic G."/>
            <person name="Lyon K."/>
            <person name="Primeaux C."/>
            <person name="Sezate S."/>
            <person name="Suvorov A.N."/>
            <person name="Kenton S."/>
            <person name="Lai H.S."/>
            <person name="Lin S.P."/>
            <person name="Qian Y."/>
            <person name="Jia H.G."/>
            <person name="Najar F.Z."/>
            <person name="Ren Q."/>
            <person name="Zhu H."/>
            <person name="Song L."/>
            <person name="White J."/>
            <person name="Yuan X."/>
            <person name="Clifton S.W."/>
            <person name="Roe B.A."/>
            <person name="McLaughlin R.E."/>
        </authorList>
    </citation>
    <scope>NUCLEOTIDE SEQUENCE [LARGE SCALE GENOMIC DNA]</scope>
    <source>
        <strain>ATCC 700294 / SF370 / Serotype M1</strain>
    </source>
</reference>
<reference key="2">
    <citation type="journal article" date="2005" name="J. Infect. Dis.">
        <title>Evolutionary origin and emergence of a highly successful clone of serotype M1 group A Streptococcus involved multiple horizontal gene transfer events.</title>
        <authorList>
            <person name="Sumby P."/>
            <person name="Porcella S.F."/>
            <person name="Madrigal A.G."/>
            <person name="Barbian K.D."/>
            <person name="Virtaneva K."/>
            <person name="Ricklefs S.M."/>
            <person name="Sturdevant D.E."/>
            <person name="Graham M.R."/>
            <person name="Vuopio-Varkila J."/>
            <person name="Hoe N.P."/>
            <person name="Musser J.M."/>
        </authorList>
    </citation>
    <scope>NUCLEOTIDE SEQUENCE [LARGE SCALE GENOMIC DNA]</scope>
    <source>
        <strain>ATCC BAA-947 / MGAS5005 / Serotype M1</strain>
    </source>
</reference>
<evidence type="ECO:0000255" key="1">
    <source>
        <dbReference type="HAMAP-Rule" id="MF_01811"/>
    </source>
</evidence>
<evidence type="ECO:0000305" key="2"/>
<keyword id="KW-1003">Cell membrane</keyword>
<keyword id="KW-0143">Chaperone</keyword>
<keyword id="KW-0449">Lipoprotein</keyword>
<keyword id="KW-0472">Membrane</keyword>
<keyword id="KW-0564">Palmitate</keyword>
<keyword id="KW-0653">Protein transport</keyword>
<keyword id="KW-1185">Reference proteome</keyword>
<keyword id="KW-0732">Signal</keyword>
<keyword id="KW-0812">Transmembrane</keyword>
<keyword id="KW-1133">Transmembrane helix</keyword>
<keyword id="KW-0813">Transport</keyword>
<name>YIDC1_STRP1</name>
<comment type="function">
    <text evidence="1">Required for the insertion and/or proper folding and/or complex formation of integral membrane proteins into the membrane. Involved in integration of membrane proteins that insert both dependently and independently of the Sec translocase complex, as well as at least some lipoproteins.</text>
</comment>
<comment type="subcellular location">
    <subcellularLocation>
        <location evidence="1">Cell membrane</location>
        <topology evidence="1">Multi-pass membrane protein</topology>
    </subcellularLocation>
</comment>
<comment type="similarity">
    <text evidence="1">Belongs to the OXA1/ALB3/YidC family. Type 2 subfamily.</text>
</comment>
<comment type="sequence caution" evidence="2">
    <conflict type="erroneous initiation">
        <sequence resource="EMBL-CDS" id="AAZ50827"/>
    </conflict>
    <text>Truncated N-terminus.</text>
</comment>
<feature type="signal peptide" evidence="1">
    <location>
        <begin position="1"/>
        <end position="25"/>
    </location>
</feature>
<feature type="chain" id="PRO_0000020410" description="Membrane protein insertase YidC 1">
    <location>
        <begin position="26"/>
        <end position="275"/>
    </location>
</feature>
<feature type="transmembrane region" description="Helical" evidence="1">
    <location>
        <begin position="58"/>
        <end position="78"/>
    </location>
</feature>
<feature type="transmembrane region" description="Helical" evidence="1">
    <location>
        <begin position="129"/>
        <end position="149"/>
    </location>
</feature>
<feature type="transmembrane region" description="Helical" evidence="1">
    <location>
        <begin position="171"/>
        <end position="191"/>
    </location>
</feature>
<feature type="transmembrane region" description="Helical" evidence="1">
    <location>
        <begin position="198"/>
        <end position="216"/>
    </location>
</feature>
<feature type="transmembrane region" description="Helical" evidence="1">
    <location>
        <begin position="222"/>
        <end position="240"/>
    </location>
</feature>
<feature type="lipid moiety-binding region" description="N-palmitoyl cysteine" evidence="1">
    <location>
        <position position="26"/>
    </location>
</feature>
<feature type="lipid moiety-binding region" description="S-diacylglycerol cysteine" evidence="1">
    <location>
        <position position="26"/>
    </location>
</feature>
<protein>
    <recommendedName>
        <fullName evidence="1">Membrane protein insertase YidC 1</fullName>
    </recommendedName>
    <alternativeName>
        <fullName evidence="1">Foldase YidC 1</fullName>
    </alternativeName>
    <alternativeName>
        <fullName evidence="1">Membrane integrase YidC 1</fullName>
    </alternativeName>
    <alternativeName>
        <fullName evidence="1">Membrane protein YidC 1</fullName>
    </alternativeName>
</protein>
<proteinExistence type="inferred from homology"/>
<gene>
    <name evidence="1" type="primary">yidC1</name>
    <name type="ordered locus">SPy_0247</name>
    <name type="ordered locus">M5005_Spy0208</name>
</gene>